<comment type="subcellular location">
    <subcellularLocation>
        <location evidence="2">Cell membrane</location>
        <topology evidence="2">Multi-pass membrane protein</topology>
    </subcellularLocation>
</comment>
<comment type="similarity">
    <text evidence="2">Belongs to the drug/metabolite transporter (DMT) superfamily. Small multidrug resistance (SMR) (TC 2.A.7.1) family.</text>
</comment>
<proteinExistence type="inferred from homology"/>
<evidence type="ECO:0000255" key="1"/>
<evidence type="ECO:0000305" key="2"/>
<reference key="1">
    <citation type="journal article" date="1997" name="Nature">
        <title>The complete genome sequence of the Gram-positive bacterium Bacillus subtilis.</title>
        <authorList>
            <person name="Kunst F."/>
            <person name="Ogasawara N."/>
            <person name="Moszer I."/>
            <person name="Albertini A.M."/>
            <person name="Alloni G."/>
            <person name="Azevedo V."/>
            <person name="Bertero M.G."/>
            <person name="Bessieres P."/>
            <person name="Bolotin A."/>
            <person name="Borchert S."/>
            <person name="Borriss R."/>
            <person name="Boursier L."/>
            <person name="Brans A."/>
            <person name="Braun M."/>
            <person name="Brignell S.C."/>
            <person name="Bron S."/>
            <person name="Brouillet S."/>
            <person name="Bruschi C.V."/>
            <person name="Caldwell B."/>
            <person name="Capuano V."/>
            <person name="Carter N.M."/>
            <person name="Choi S.-K."/>
            <person name="Codani J.-J."/>
            <person name="Connerton I.F."/>
            <person name="Cummings N.J."/>
            <person name="Daniel R.A."/>
            <person name="Denizot F."/>
            <person name="Devine K.M."/>
            <person name="Duesterhoeft A."/>
            <person name="Ehrlich S.D."/>
            <person name="Emmerson P.T."/>
            <person name="Entian K.-D."/>
            <person name="Errington J."/>
            <person name="Fabret C."/>
            <person name="Ferrari E."/>
            <person name="Foulger D."/>
            <person name="Fritz C."/>
            <person name="Fujita M."/>
            <person name="Fujita Y."/>
            <person name="Fuma S."/>
            <person name="Galizzi A."/>
            <person name="Galleron N."/>
            <person name="Ghim S.-Y."/>
            <person name="Glaser P."/>
            <person name="Goffeau A."/>
            <person name="Golightly E.J."/>
            <person name="Grandi G."/>
            <person name="Guiseppi G."/>
            <person name="Guy B.J."/>
            <person name="Haga K."/>
            <person name="Haiech J."/>
            <person name="Harwood C.R."/>
            <person name="Henaut A."/>
            <person name="Hilbert H."/>
            <person name="Holsappel S."/>
            <person name="Hosono S."/>
            <person name="Hullo M.-F."/>
            <person name="Itaya M."/>
            <person name="Jones L.-M."/>
            <person name="Joris B."/>
            <person name="Karamata D."/>
            <person name="Kasahara Y."/>
            <person name="Klaerr-Blanchard M."/>
            <person name="Klein C."/>
            <person name="Kobayashi Y."/>
            <person name="Koetter P."/>
            <person name="Koningstein G."/>
            <person name="Krogh S."/>
            <person name="Kumano M."/>
            <person name="Kurita K."/>
            <person name="Lapidus A."/>
            <person name="Lardinois S."/>
            <person name="Lauber J."/>
            <person name="Lazarevic V."/>
            <person name="Lee S.-M."/>
            <person name="Levine A."/>
            <person name="Liu H."/>
            <person name="Masuda S."/>
            <person name="Mauel C."/>
            <person name="Medigue C."/>
            <person name="Medina N."/>
            <person name="Mellado R.P."/>
            <person name="Mizuno M."/>
            <person name="Moestl D."/>
            <person name="Nakai S."/>
            <person name="Noback M."/>
            <person name="Noone D."/>
            <person name="O'Reilly M."/>
            <person name="Ogawa K."/>
            <person name="Ogiwara A."/>
            <person name="Oudega B."/>
            <person name="Park S.-H."/>
            <person name="Parro V."/>
            <person name="Pohl T.M."/>
            <person name="Portetelle D."/>
            <person name="Porwollik S."/>
            <person name="Prescott A.M."/>
            <person name="Presecan E."/>
            <person name="Pujic P."/>
            <person name="Purnelle B."/>
            <person name="Rapoport G."/>
            <person name="Rey M."/>
            <person name="Reynolds S."/>
            <person name="Rieger M."/>
            <person name="Rivolta C."/>
            <person name="Rocha E."/>
            <person name="Roche B."/>
            <person name="Rose M."/>
            <person name="Sadaie Y."/>
            <person name="Sato T."/>
            <person name="Scanlan E."/>
            <person name="Schleich S."/>
            <person name="Schroeter R."/>
            <person name="Scoffone F."/>
            <person name="Sekiguchi J."/>
            <person name="Sekowska A."/>
            <person name="Seror S.J."/>
            <person name="Serror P."/>
            <person name="Shin B.-S."/>
            <person name="Soldo B."/>
            <person name="Sorokin A."/>
            <person name="Tacconi E."/>
            <person name="Takagi T."/>
            <person name="Takahashi H."/>
            <person name="Takemaru K."/>
            <person name="Takeuchi M."/>
            <person name="Tamakoshi A."/>
            <person name="Tanaka T."/>
            <person name="Terpstra P."/>
            <person name="Tognoni A."/>
            <person name="Tosato V."/>
            <person name="Uchiyama S."/>
            <person name="Vandenbol M."/>
            <person name="Vannier F."/>
            <person name="Vassarotti A."/>
            <person name="Viari A."/>
            <person name="Wambutt R."/>
            <person name="Wedler E."/>
            <person name="Wedler H."/>
            <person name="Weitzenegger T."/>
            <person name="Winters P."/>
            <person name="Wipat A."/>
            <person name="Yamamoto H."/>
            <person name="Yamane K."/>
            <person name="Yasumoto K."/>
            <person name="Yata K."/>
            <person name="Yoshida K."/>
            <person name="Yoshikawa H.-F."/>
            <person name="Zumstein E."/>
            <person name="Yoshikawa H."/>
            <person name="Danchin A."/>
        </authorList>
    </citation>
    <scope>NUCLEOTIDE SEQUENCE [LARGE SCALE GENOMIC DNA]</scope>
    <source>
        <strain>168</strain>
    </source>
</reference>
<name>YVAE_BACSU</name>
<accession>O32227</accession>
<feature type="chain" id="PRO_0000108114" description="Uncharacterized membrane protein YvaE">
    <location>
        <begin position="1"/>
        <end position="119"/>
    </location>
</feature>
<feature type="transmembrane region" description="Helical" evidence="1">
    <location>
        <begin position="3"/>
        <end position="23"/>
    </location>
</feature>
<feature type="transmembrane region" description="Helical" evidence="1">
    <location>
        <begin position="29"/>
        <end position="49"/>
    </location>
</feature>
<feature type="transmembrane region" description="Helical" evidence="1">
    <location>
        <begin position="58"/>
        <end position="78"/>
    </location>
</feature>
<feature type="transmembrane region" description="Helical" evidence="1">
    <location>
        <begin position="87"/>
        <end position="107"/>
    </location>
</feature>
<keyword id="KW-1003">Cell membrane</keyword>
<keyword id="KW-0472">Membrane</keyword>
<keyword id="KW-1185">Reference proteome</keyword>
<keyword id="KW-0812">Transmembrane</keyword>
<keyword id="KW-1133">Transmembrane helix</keyword>
<keyword id="KW-0813">Transport</keyword>
<organism>
    <name type="scientific">Bacillus subtilis (strain 168)</name>
    <dbReference type="NCBI Taxonomy" id="224308"/>
    <lineage>
        <taxon>Bacteria</taxon>
        <taxon>Bacillati</taxon>
        <taxon>Bacillota</taxon>
        <taxon>Bacilli</taxon>
        <taxon>Bacillales</taxon>
        <taxon>Bacillaceae</taxon>
        <taxon>Bacillus</taxon>
    </lineage>
</organism>
<gene>
    <name type="primary">yvaE</name>
    <name type="ordered locus">BSU33570</name>
</gene>
<sequence>MNWVFLCLAILFEVAGTVSMKLSSGFTKLIPSLLLIFFYGGSLFFLTLTLKSIDVSVAYAVWSGMGIVLITVVGFLFFQEHVSVMKVISIGLIIAGVVSLNLIEHVAVSEPVHKSGQYK</sequence>
<dbReference type="EMBL" id="AL009126">
    <property type="protein sequence ID" value="CAB15362.1"/>
    <property type="molecule type" value="Genomic_DNA"/>
</dbReference>
<dbReference type="PIR" id="C70027">
    <property type="entry name" value="C70027"/>
</dbReference>
<dbReference type="RefSeq" id="NP_391237.1">
    <property type="nucleotide sequence ID" value="NC_000964.3"/>
</dbReference>
<dbReference type="RefSeq" id="WP_003243874.1">
    <property type="nucleotide sequence ID" value="NZ_OZ025638.1"/>
</dbReference>
<dbReference type="SMR" id="O32227"/>
<dbReference type="FunCoup" id="O32227">
    <property type="interactions" value="8"/>
</dbReference>
<dbReference type="STRING" id="224308.BSU33570"/>
<dbReference type="PaxDb" id="224308-BSU33570"/>
<dbReference type="DNASU" id="936156"/>
<dbReference type="EnsemblBacteria" id="CAB15362">
    <property type="protein sequence ID" value="CAB15362"/>
    <property type="gene ID" value="BSU_33570"/>
</dbReference>
<dbReference type="GeneID" id="936156"/>
<dbReference type="KEGG" id="bsu:BSU33570"/>
<dbReference type="PATRIC" id="fig|224308.179.peg.3642"/>
<dbReference type="eggNOG" id="COG2076">
    <property type="taxonomic scope" value="Bacteria"/>
</dbReference>
<dbReference type="InParanoid" id="O32227"/>
<dbReference type="OrthoDB" id="21828at2"/>
<dbReference type="PhylomeDB" id="O32227"/>
<dbReference type="BioCyc" id="BSUB:BSU33570-MONOMER"/>
<dbReference type="Proteomes" id="UP000001570">
    <property type="component" value="Chromosome"/>
</dbReference>
<dbReference type="GO" id="GO:0005886">
    <property type="term" value="C:plasma membrane"/>
    <property type="evidence" value="ECO:0007669"/>
    <property type="project" value="UniProtKB-SubCell"/>
</dbReference>
<dbReference type="GO" id="GO:0022857">
    <property type="term" value="F:transmembrane transporter activity"/>
    <property type="evidence" value="ECO:0007669"/>
    <property type="project" value="InterPro"/>
</dbReference>
<dbReference type="FunFam" id="1.10.3730.20:FF:000001">
    <property type="entry name" value="Quaternary ammonium compound resistance transporter SugE"/>
    <property type="match status" value="1"/>
</dbReference>
<dbReference type="Gene3D" id="1.10.3730.20">
    <property type="match status" value="1"/>
</dbReference>
<dbReference type="InterPro" id="IPR000390">
    <property type="entry name" value="Small_drug/metabolite_transptr"/>
</dbReference>
<dbReference type="InterPro" id="IPR045324">
    <property type="entry name" value="Small_multidrug_res"/>
</dbReference>
<dbReference type="PANTHER" id="PTHR30561:SF1">
    <property type="entry name" value="MULTIDRUG TRANSPORTER EMRE"/>
    <property type="match status" value="1"/>
</dbReference>
<dbReference type="PANTHER" id="PTHR30561">
    <property type="entry name" value="SMR FAMILY PROTON-DEPENDENT DRUG EFFLUX TRANSPORTER SUGE"/>
    <property type="match status" value="1"/>
</dbReference>
<dbReference type="Pfam" id="PF00893">
    <property type="entry name" value="Multi_Drug_Res"/>
    <property type="match status" value="1"/>
</dbReference>
<dbReference type="SUPFAM" id="SSF103481">
    <property type="entry name" value="Multidrug resistance efflux transporter EmrE"/>
    <property type="match status" value="1"/>
</dbReference>
<protein>
    <recommendedName>
        <fullName>Uncharacterized membrane protein YvaE</fullName>
    </recommendedName>
</protein>